<name>RR7_SCIVE</name>
<sequence>MSRQTPARKRRKKYSEKSDAIYHNRLVNMLVNRILKNGKKALAYKIFYRSMKTIYENTNINPLLIIRQAIQTLTPKVMVKARRVTGTTHQIPIDVKPKQGTILAIRWLLESSRKRSGQTMHDKLSHEIMDAARNKGHAIRKKEETHKMAESNRAXAHYR</sequence>
<dbReference type="EMBL" id="AF238076">
    <property type="protein sequence ID" value="AAQ14233.1"/>
    <property type="molecule type" value="Genomic_DNA"/>
</dbReference>
<dbReference type="GO" id="GO:0009507">
    <property type="term" value="C:chloroplast"/>
    <property type="evidence" value="ECO:0007669"/>
    <property type="project" value="UniProtKB-SubCell"/>
</dbReference>
<dbReference type="GO" id="GO:0015935">
    <property type="term" value="C:small ribosomal subunit"/>
    <property type="evidence" value="ECO:0007669"/>
    <property type="project" value="InterPro"/>
</dbReference>
<dbReference type="GO" id="GO:0019843">
    <property type="term" value="F:rRNA binding"/>
    <property type="evidence" value="ECO:0007669"/>
    <property type="project" value="UniProtKB-UniRule"/>
</dbReference>
<dbReference type="GO" id="GO:0003735">
    <property type="term" value="F:structural constituent of ribosome"/>
    <property type="evidence" value="ECO:0007669"/>
    <property type="project" value="InterPro"/>
</dbReference>
<dbReference type="GO" id="GO:0006412">
    <property type="term" value="P:translation"/>
    <property type="evidence" value="ECO:0007669"/>
    <property type="project" value="UniProtKB-UniRule"/>
</dbReference>
<dbReference type="CDD" id="cd14871">
    <property type="entry name" value="uS7_Chloroplast"/>
    <property type="match status" value="1"/>
</dbReference>
<dbReference type="FunFam" id="1.10.455.10:FF:000001">
    <property type="entry name" value="30S ribosomal protein S7"/>
    <property type="match status" value="1"/>
</dbReference>
<dbReference type="Gene3D" id="1.10.455.10">
    <property type="entry name" value="Ribosomal protein S7 domain"/>
    <property type="match status" value="1"/>
</dbReference>
<dbReference type="HAMAP" id="MF_00480_B">
    <property type="entry name" value="Ribosomal_uS7_B"/>
    <property type="match status" value="1"/>
</dbReference>
<dbReference type="InterPro" id="IPR000235">
    <property type="entry name" value="Ribosomal_uS7"/>
</dbReference>
<dbReference type="InterPro" id="IPR005717">
    <property type="entry name" value="Ribosomal_uS7_bac/org-type"/>
</dbReference>
<dbReference type="InterPro" id="IPR020606">
    <property type="entry name" value="Ribosomal_uS7_CS"/>
</dbReference>
<dbReference type="InterPro" id="IPR023798">
    <property type="entry name" value="Ribosomal_uS7_dom"/>
</dbReference>
<dbReference type="InterPro" id="IPR036823">
    <property type="entry name" value="Ribosomal_uS7_dom_sf"/>
</dbReference>
<dbReference type="NCBIfam" id="TIGR01029">
    <property type="entry name" value="rpsG_bact"/>
    <property type="match status" value="1"/>
</dbReference>
<dbReference type="PANTHER" id="PTHR11205">
    <property type="entry name" value="RIBOSOMAL PROTEIN S7"/>
    <property type="match status" value="1"/>
</dbReference>
<dbReference type="Pfam" id="PF00177">
    <property type="entry name" value="Ribosomal_S7"/>
    <property type="match status" value="1"/>
</dbReference>
<dbReference type="PIRSF" id="PIRSF002122">
    <property type="entry name" value="RPS7p_RPS7a_RPS5e_RPS7o"/>
    <property type="match status" value="1"/>
</dbReference>
<dbReference type="SUPFAM" id="SSF47973">
    <property type="entry name" value="Ribosomal protein S7"/>
    <property type="match status" value="1"/>
</dbReference>
<dbReference type="PROSITE" id="PS00052">
    <property type="entry name" value="RIBOSOMAL_S7"/>
    <property type="match status" value="1"/>
</dbReference>
<accession>Q6KGW1</accession>
<geneLocation type="chloroplast"/>
<keyword id="KW-0150">Chloroplast</keyword>
<keyword id="KW-0934">Plastid</keyword>
<keyword id="KW-0687">Ribonucleoprotein</keyword>
<keyword id="KW-0689">Ribosomal protein</keyword>
<keyword id="KW-0694">RNA-binding</keyword>
<keyword id="KW-0699">rRNA-binding</keyword>
<organism>
    <name type="scientific">Sciadopitys verticillata</name>
    <name type="common">Japanese umbrella-pine</name>
    <name type="synonym">Taxus verticillata</name>
    <dbReference type="NCBI Taxonomy" id="28979"/>
    <lineage>
        <taxon>Eukaryota</taxon>
        <taxon>Viridiplantae</taxon>
        <taxon>Streptophyta</taxon>
        <taxon>Embryophyta</taxon>
        <taxon>Tracheophyta</taxon>
        <taxon>Spermatophyta</taxon>
        <taxon>Pinopsida</taxon>
        <taxon>Pinidae</taxon>
        <taxon>Conifers II</taxon>
        <taxon>Cupressales</taxon>
        <taxon>Sciadopityaceae</taxon>
        <taxon>Sciadopitys</taxon>
    </lineage>
</organism>
<proteinExistence type="inferred from homology"/>
<reference key="1">
    <citation type="submission" date="2000-02" db="EMBL/GenBank/DDBJ databases">
        <title>Long branches in the seed plants and the root of the angiosperms.</title>
        <authorList>
            <person name="Graham S.W."/>
            <person name="Reeves P.A."/>
            <person name="Burns A."/>
            <person name="Olmstead R.G."/>
        </authorList>
    </citation>
    <scope>NUCLEOTIDE SEQUENCE [GENOMIC DNA]</scope>
</reference>
<gene>
    <name type="primary">rps7</name>
</gene>
<protein>
    <recommendedName>
        <fullName evidence="3">Small ribosomal subunit protein uS7c</fullName>
    </recommendedName>
    <alternativeName>
        <fullName>30S ribosomal protein S7, chloroplastic</fullName>
    </alternativeName>
</protein>
<feature type="chain" id="PRO_0000124502" description="Small ribosomal subunit protein uS7c">
    <location>
        <begin position="1"/>
        <end position="159"/>
    </location>
</feature>
<feature type="region of interest" description="Disordered" evidence="2">
    <location>
        <begin position="137"/>
        <end position="159"/>
    </location>
</feature>
<feature type="compositionally biased region" description="Basic and acidic residues" evidence="2">
    <location>
        <begin position="141"/>
        <end position="150"/>
    </location>
</feature>
<comment type="function">
    <text evidence="1">One of the primary rRNA binding proteins, it binds directly to 16S rRNA where it nucleates assembly of the head domain of the 30S subunit.</text>
</comment>
<comment type="subunit">
    <text>Part of the 30S ribosomal subunit.</text>
</comment>
<comment type="subcellular location">
    <subcellularLocation>
        <location>Plastid</location>
        <location>Chloroplast</location>
    </subcellularLocation>
</comment>
<comment type="similarity">
    <text evidence="3">Belongs to the universal ribosomal protein uS7 family.</text>
</comment>
<evidence type="ECO:0000250" key="1"/>
<evidence type="ECO:0000256" key="2">
    <source>
        <dbReference type="SAM" id="MobiDB-lite"/>
    </source>
</evidence>
<evidence type="ECO:0000305" key="3"/>